<dbReference type="EC" id="4.2.3.3" evidence="1"/>
<dbReference type="EMBL" id="CP000057">
    <property type="protein sequence ID" value="AAX88685.1"/>
    <property type="molecule type" value="Genomic_DNA"/>
</dbReference>
<dbReference type="RefSeq" id="WP_005687337.1">
    <property type="nucleotide sequence ID" value="NC_007146.2"/>
</dbReference>
<dbReference type="SMR" id="Q4QJW2"/>
<dbReference type="GeneID" id="93220632"/>
<dbReference type="KEGG" id="hit:NTHI1931"/>
<dbReference type="HOGENOM" id="CLU_120420_0_1_6"/>
<dbReference type="Proteomes" id="UP000002525">
    <property type="component" value="Chromosome"/>
</dbReference>
<dbReference type="GO" id="GO:0005829">
    <property type="term" value="C:cytosol"/>
    <property type="evidence" value="ECO:0007669"/>
    <property type="project" value="TreeGrafter"/>
</dbReference>
<dbReference type="GO" id="GO:0008929">
    <property type="term" value="F:methylglyoxal synthase activity"/>
    <property type="evidence" value="ECO:0007669"/>
    <property type="project" value="UniProtKB-UniRule"/>
</dbReference>
<dbReference type="GO" id="GO:0019242">
    <property type="term" value="P:methylglyoxal biosynthetic process"/>
    <property type="evidence" value="ECO:0007669"/>
    <property type="project" value="UniProtKB-UniRule"/>
</dbReference>
<dbReference type="CDD" id="cd01422">
    <property type="entry name" value="MGS"/>
    <property type="match status" value="1"/>
</dbReference>
<dbReference type="FunFam" id="3.40.50.1380:FF:000002">
    <property type="entry name" value="Methylglyoxal synthase"/>
    <property type="match status" value="1"/>
</dbReference>
<dbReference type="Gene3D" id="3.40.50.1380">
    <property type="entry name" value="Methylglyoxal synthase-like domain"/>
    <property type="match status" value="1"/>
</dbReference>
<dbReference type="HAMAP" id="MF_00549">
    <property type="entry name" value="Methylglyoxal_synth"/>
    <property type="match status" value="1"/>
</dbReference>
<dbReference type="InterPro" id="IPR004363">
    <property type="entry name" value="Methylgl_synth"/>
</dbReference>
<dbReference type="InterPro" id="IPR018148">
    <property type="entry name" value="Methylglyoxal_synth_AS"/>
</dbReference>
<dbReference type="InterPro" id="IPR011607">
    <property type="entry name" value="MGS-like_dom"/>
</dbReference>
<dbReference type="InterPro" id="IPR036914">
    <property type="entry name" value="MGS-like_dom_sf"/>
</dbReference>
<dbReference type="NCBIfam" id="TIGR00160">
    <property type="entry name" value="MGSA"/>
    <property type="match status" value="1"/>
</dbReference>
<dbReference type="NCBIfam" id="NF003559">
    <property type="entry name" value="PRK05234.1"/>
    <property type="match status" value="1"/>
</dbReference>
<dbReference type="PANTHER" id="PTHR30492">
    <property type="entry name" value="METHYLGLYOXAL SYNTHASE"/>
    <property type="match status" value="1"/>
</dbReference>
<dbReference type="PANTHER" id="PTHR30492:SF0">
    <property type="entry name" value="METHYLGLYOXAL SYNTHASE"/>
    <property type="match status" value="1"/>
</dbReference>
<dbReference type="Pfam" id="PF02142">
    <property type="entry name" value="MGS"/>
    <property type="match status" value="1"/>
</dbReference>
<dbReference type="PIRSF" id="PIRSF006614">
    <property type="entry name" value="Methylglyox_syn"/>
    <property type="match status" value="1"/>
</dbReference>
<dbReference type="SMART" id="SM00851">
    <property type="entry name" value="MGS"/>
    <property type="match status" value="1"/>
</dbReference>
<dbReference type="SUPFAM" id="SSF52335">
    <property type="entry name" value="Methylglyoxal synthase-like"/>
    <property type="match status" value="1"/>
</dbReference>
<dbReference type="PROSITE" id="PS01335">
    <property type="entry name" value="METHYLGLYOXAL_SYNTH"/>
    <property type="match status" value="1"/>
</dbReference>
<dbReference type="PROSITE" id="PS51855">
    <property type="entry name" value="MGS"/>
    <property type="match status" value="1"/>
</dbReference>
<organism>
    <name type="scientific">Haemophilus influenzae (strain 86-028NP)</name>
    <dbReference type="NCBI Taxonomy" id="281310"/>
    <lineage>
        <taxon>Bacteria</taxon>
        <taxon>Pseudomonadati</taxon>
        <taxon>Pseudomonadota</taxon>
        <taxon>Gammaproteobacteria</taxon>
        <taxon>Pasteurellales</taxon>
        <taxon>Pasteurellaceae</taxon>
        <taxon>Haemophilus</taxon>
    </lineage>
</organism>
<reference key="1">
    <citation type="journal article" date="2005" name="J. Bacteriol.">
        <title>Genomic sequence of an otitis media isolate of nontypeable Haemophilus influenzae: comparative study with H. influenzae serotype d, strain KW20.</title>
        <authorList>
            <person name="Harrison A."/>
            <person name="Dyer D.W."/>
            <person name="Gillaspy A."/>
            <person name="Ray W.C."/>
            <person name="Mungur R."/>
            <person name="Carson M.B."/>
            <person name="Zhong H."/>
            <person name="Gipson J."/>
            <person name="Gipson M."/>
            <person name="Johnson L.S."/>
            <person name="Lewis L."/>
            <person name="Bakaletz L.O."/>
            <person name="Munson R.S. Jr."/>
        </authorList>
    </citation>
    <scope>NUCLEOTIDE SEQUENCE [LARGE SCALE GENOMIC DNA]</scope>
    <source>
        <strain>86-028NP</strain>
    </source>
</reference>
<feature type="chain" id="PRO_1000017810" description="Methylglyoxal synthase">
    <location>
        <begin position="1"/>
        <end position="152"/>
    </location>
</feature>
<feature type="domain" description="MGS-like" evidence="1">
    <location>
        <begin position="6"/>
        <end position="152"/>
    </location>
</feature>
<feature type="active site" description="Proton donor/acceptor" evidence="1">
    <location>
        <position position="71"/>
    </location>
</feature>
<feature type="binding site" evidence="1">
    <location>
        <position position="19"/>
    </location>
    <ligand>
        <name>substrate</name>
    </ligand>
</feature>
<feature type="binding site" evidence="1">
    <location>
        <position position="23"/>
    </location>
    <ligand>
        <name>substrate</name>
    </ligand>
</feature>
<feature type="binding site" evidence="1">
    <location>
        <begin position="45"/>
        <end position="48"/>
    </location>
    <ligand>
        <name>substrate</name>
    </ligand>
</feature>
<feature type="binding site" evidence="1">
    <location>
        <begin position="65"/>
        <end position="66"/>
    </location>
    <ligand>
        <name>substrate</name>
    </ligand>
</feature>
<feature type="binding site" evidence="1">
    <location>
        <position position="98"/>
    </location>
    <ligand>
        <name>substrate</name>
    </ligand>
</feature>
<comment type="function">
    <text evidence="1">Catalyzes the formation of methylglyoxal from dihydroxyacetone phosphate.</text>
</comment>
<comment type="catalytic activity">
    <reaction evidence="1">
        <text>dihydroxyacetone phosphate = methylglyoxal + phosphate</text>
        <dbReference type="Rhea" id="RHEA:17937"/>
        <dbReference type="ChEBI" id="CHEBI:17158"/>
        <dbReference type="ChEBI" id="CHEBI:43474"/>
        <dbReference type="ChEBI" id="CHEBI:57642"/>
        <dbReference type="EC" id="4.2.3.3"/>
    </reaction>
</comment>
<comment type="similarity">
    <text evidence="1">Belongs to the methylglyoxal synthase family.</text>
</comment>
<sequence length="152" mass="17055">MQTTTRTLTQHKRIALVAHDSCKKNLLNWTQKHKEALKPHILYATGTTGHILERETGLSIQSLLSGPMGGDQQLGGLIAEKKIDMMIFFWDPMNAAPHDPDVKALMRIATVWNIPVAINQSSADFLLTSVLFEQDVEIDVPDYEGYLKERLA</sequence>
<name>MGSA_HAEI8</name>
<evidence type="ECO:0000255" key="1">
    <source>
        <dbReference type="HAMAP-Rule" id="MF_00549"/>
    </source>
</evidence>
<proteinExistence type="inferred from homology"/>
<accession>Q4QJW2</accession>
<gene>
    <name evidence="1" type="primary">mgsA</name>
    <name type="ordered locus">NTHI1931</name>
</gene>
<protein>
    <recommendedName>
        <fullName evidence="1">Methylglyoxal synthase</fullName>
        <shortName evidence="1">MGS</shortName>
        <ecNumber evidence="1">4.2.3.3</ecNumber>
    </recommendedName>
</protein>
<keyword id="KW-0456">Lyase</keyword>